<dbReference type="EMBL" id="AB053301">
    <property type="protein sequence ID" value="BAB69011.1"/>
    <property type="molecule type" value="mRNA"/>
</dbReference>
<dbReference type="EMBL" id="AK090601">
    <property type="protein sequence ID" value="BAC03487.1"/>
    <property type="molecule type" value="mRNA"/>
</dbReference>
<dbReference type="EMBL" id="AK303954">
    <property type="protein sequence ID" value="BAG64880.1"/>
    <property type="molecule type" value="mRNA"/>
</dbReference>
<dbReference type="EMBL" id="AK304395">
    <property type="protein sequence ID" value="BAG65230.1"/>
    <property type="molecule type" value="mRNA"/>
</dbReference>
<dbReference type="EMBL" id="AC007279">
    <property type="protein sequence ID" value="AAY15056.1"/>
    <property type="status" value="ALT_SEQ"/>
    <property type="molecule type" value="Genomic_DNA"/>
</dbReference>
<dbReference type="EMBL" id="AC007282">
    <property type="protein sequence ID" value="AAY14694.1"/>
    <property type="status" value="ALT_SEQ"/>
    <property type="molecule type" value="Genomic_DNA"/>
</dbReference>
<dbReference type="EMBL" id="BC013730">
    <property type="protein sequence ID" value="AAH13730.1"/>
    <property type="molecule type" value="mRNA"/>
</dbReference>
<dbReference type="EMBL" id="BC029611">
    <property type="protein sequence ID" value="AAH29611.1"/>
    <property type="molecule type" value="mRNA"/>
</dbReference>
<dbReference type="EMBL" id="BX538000">
    <property type="protein sequence ID" value="CAD97955.1"/>
    <property type="molecule type" value="mRNA"/>
</dbReference>
<dbReference type="CCDS" id="CCDS46489.1">
    <molecule id="Q96Q45-1"/>
</dbReference>
<dbReference type="CCDS" id="CCDS46490.1">
    <molecule id="Q96Q45-2"/>
</dbReference>
<dbReference type="RefSeq" id="NP_001037850.1">
    <molecule id="Q96Q45-1"/>
    <property type="nucleotide sequence ID" value="NM_001044385.3"/>
</dbReference>
<dbReference type="RefSeq" id="NP_689601.2">
    <molecule id="Q96Q45-2"/>
    <property type="nucleotide sequence ID" value="NM_152388.4"/>
</dbReference>
<dbReference type="BioGRID" id="122382">
    <property type="interactions" value="211"/>
</dbReference>
<dbReference type="ComplexPortal" id="CPX-2531">
    <property type="entry name" value="MKS transition zone complex"/>
</dbReference>
<dbReference type="CORUM" id="Q96Q45"/>
<dbReference type="DIP" id="DIP-56376N"/>
<dbReference type="FunCoup" id="Q96Q45">
    <property type="interactions" value="641"/>
</dbReference>
<dbReference type="IntAct" id="Q96Q45">
    <property type="interactions" value="175"/>
</dbReference>
<dbReference type="MINT" id="Q96Q45"/>
<dbReference type="STRING" id="9606.ENSP00000386264"/>
<dbReference type="MoonDB" id="Q96Q45">
    <property type="type" value="Predicted"/>
</dbReference>
<dbReference type="TCDB" id="8.A.121.1.1">
    <property type="family name" value="the transmembrane protein 237 (tmem237) family"/>
</dbReference>
<dbReference type="iPTMnet" id="Q96Q45"/>
<dbReference type="PhosphoSitePlus" id="Q96Q45"/>
<dbReference type="BioMuta" id="TMEM237"/>
<dbReference type="DMDM" id="378405209"/>
<dbReference type="jPOST" id="Q96Q45"/>
<dbReference type="MassIVE" id="Q96Q45"/>
<dbReference type="PaxDb" id="9606-ENSP00000386264"/>
<dbReference type="PeptideAtlas" id="Q96Q45"/>
<dbReference type="ProteomicsDB" id="77826">
    <molecule id="Q96Q45-1"/>
</dbReference>
<dbReference type="ProteomicsDB" id="77827">
    <molecule id="Q96Q45-2"/>
</dbReference>
<dbReference type="ProteomicsDB" id="77828">
    <molecule id="Q96Q45-3"/>
</dbReference>
<dbReference type="ProteomicsDB" id="77829">
    <molecule id="Q96Q45-4"/>
</dbReference>
<dbReference type="ProteomicsDB" id="77830">
    <molecule id="Q96Q45-5"/>
</dbReference>
<dbReference type="Pumba" id="Q96Q45"/>
<dbReference type="Antibodypedia" id="47646">
    <property type="antibodies" value="100 antibodies from 22 providers"/>
</dbReference>
<dbReference type="DNASU" id="65062"/>
<dbReference type="Ensembl" id="ENST00000409444.6">
    <molecule id="Q96Q45-2"/>
    <property type="protein sequence ID" value="ENSP00000387203.2"/>
    <property type="gene ID" value="ENSG00000155755.20"/>
</dbReference>
<dbReference type="Ensembl" id="ENST00000409883.7">
    <molecule id="Q96Q45-1"/>
    <property type="protein sequence ID" value="ENSP00000386264.2"/>
    <property type="gene ID" value="ENSG00000155755.20"/>
</dbReference>
<dbReference type="GeneID" id="65062"/>
<dbReference type="KEGG" id="hsa:65062"/>
<dbReference type="MANE-Select" id="ENST00000409883.7">
    <property type="protein sequence ID" value="ENSP00000386264.2"/>
    <property type="RefSeq nucleotide sequence ID" value="NM_001044385.3"/>
    <property type="RefSeq protein sequence ID" value="NP_001037850.1"/>
</dbReference>
<dbReference type="UCSC" id="uc061rkx.1">
    <molecule id="Q96Q45-1"/>
    <property type="organism name" value="human"/>
</dbReference>
<dbReference type="AGR" id="HGNC:14432"/>
<dbReference type="CTD" id="65062"/>
<dbReference type="DisGeNET" id="65062"/>
<dbReference type="GeneCards" id="TMEM237"/>
<dbReference type="GeneReviews" id="TMEM237"/>
<dbReference type="HGNC" id="HGNC:14432">
    <property type="gene designation" value="TMEM237"/>
</dbReference>
<dbReference type="HPA" id="ENSG00000155755">
    <property type="expression patterns" value="Tissue enriched (retina)"/>
</dbReference>
<dbReference type="MalaCards" id="TMEM237"/>
<dbReference type="MIM" id="614423">
    <property type="type" value="gene"/>
</dbReference>
<dbReference type="MIM" id="614424">
    <property type="type" value="phenotype"/>
</dbReference>
<dbReference type="neXtProt" id="NX_Q96Q45"/>
<dbReference type="OpenTargets" id="ENSG00000155755"/>
<dbReference type="Orphanet" id="475">
    <property type="disease" value="Joubert syndrome"/>
</dbReference>
<dbReference type="Orphanet" id="2318">
    <property type="disease" value="Joubert syndrome with oculorenal defect"/>
</dbReference>
<dbReference type="Orphanet" id="220497">
    <property type="disease" value="Joubert syndrome with renal defect"/>
</dbReference>
<dbReference type="Orphanet" id="564">
    <property type="disease" value="Meckel syndrome"/>
</dbReference>
<dbReference type="PharmGKB" id="PA24745"/>
<dbReference type="VEuPathDB" id="HostDB:ENSG00000155755"/>
<dbReference type="eggNOG" id="ENOG502QTW0">
    <property type="taxonomic scope" value="Eukaryota"/>
</dbReference>
<dbReference type="GeneTree" id="ENSGT00390000005159"/>
<dbReference type="InParanoid" id="Q96Q45"/>
<dbReference type="OMA" id="CAVWNVV"/>
<dbReference type="OrthoDB" id="550113at2759"/>
<dbReference type="PAN-GO" id="Q96Q45">
    <property type="GO annotations" value="2 GO annotations based on evolutionary models"/>
</dbReference>
<dbReference type="PhylomeDB" id="Q96Q45"/>
<dbReference type="TreeFam" id="TF329703"/>
<dbReference type="PathwayCommons" id="Q96Q45"/>
<dbReference type="SignaLink" id="Q96Q45"/>
<dbReference type="BioGRID-ORCS" id="65062">
    <property type="hits" value="9 hits in 1164 CRISPR screens"/>
</dbReference>
<dbReference type="ChiTaRS" id="TMEM237">
    <property type="organism name" value="human"/>
</dbReference>
<dbReference type="GenomeRNAi" id="65062"/>
<dbReference type="Pharos" id="Q96Q45">
    <property type="development level" value="Tbio"/>
</dbReference>
<dbReference type="PRO" id="PR:Q96Q45"/>
<dbReference type="Proteomes" id="UP000005640">
    <property type="component" value="Chromosome 2"/>
</dbReference>
<dbReference type="RNAct" id="Q96Q45">
    <property type="molecule type" value="protein"/>
</dbReference>
<dbReference type="Bgee" id="ENSG00000155755">
    <property type="expression patterns" value="Expressed in calcaneal tendon and 171 other cell types or tissues"/>
</dbReference>
<dbReference type="ExpressionAtlas" id="Q96Q45">
    <property type="expression patterns" value="baseline and differential"/>
</dbReference>
<dbReference type="GO" id="GO:0035869">
    <property type="term" value="C:ciliary transition zone"/>
    <property type="evidence" value="ECO:0000314"/>
    <property type="project" value="UniProtKB"/>
</dbReference>
<dbReference type="GO" id="GO:0005929">
    <property type="term" value="C:cilium"/>
    <property type="evidence" value="ECO:0000314"/>
    <property type="project" value="HPA"/>
</dbReference>
<dbReference type="GO" id="GO:0120199">
    <property type="term" value="C:cone photoreceptor outer segment"/>
    <property type="evidence" value="ECO:0007669"/>
    <property type="project" value="Ensembl"/>
</dbReference>
<dbReference type="GO" id="GO:0016020">
    <property type="term" value="C:membrane"/>
    <property type="evidence" value="ECO:0007005"/>
    <property type="project" value="UniProtKB"/>
</dbReference>
<dbReference type="GO" id="GO:0015630">
    <property type="term" value="C:microtubule cytoskeleton"/>
    <property type="evidence" value="ECO:0000314"/>
    <property type="project" value="HPA"/>
</dbReference>
<dbReference type="GO" id="GO:0016607">
    <property type="term" value="C:nuclear speck"/>
    <property type="evidence" value="ECO:0000314"/>
    <property type="project" value="HPA"/>
</dbReference>
<dbReference type="GO" id="GO:0032391">
    <property type="term" value="C:photoreceptor connecting cilium"/>
    <property type="evidence" value="ECO:0007669"/>
    <property type="project" value="Ensembl"/>
</dbReference>
<dbReference type="GO" id="GO:0005886">
    <property type="term" value="C:plasma membrane"/>
    <property type="evidence" value="ECO:0000314"/>
    <property type="project" value="HPA"/>
</dbReference>
<dbReference type="GO" id="GO:0120200">
    <property type="term" value="C:rod photoreceptor outer segment"/>
    <property type="evidence" value="ECO:0007669"/>
    <property type="project" value="Ensembl"/>
</dbReference>
<dbReference type="GO" id="GO:0060271">
    <property type="term" value="P:cilium assembly"/>
    <property type="evidence" value="ECO:0000315"/>
    <property type="project" value="UniProtKB"/>
</dbReference>
<dbReference type="GO" id="GO:0030111">
    <property type="term" value="P:regulation of Wnt signaling pathway"/>
    <property type="evidence" value="ECO:0000315"/>
    <property type="project" value="UniProtKB"/>
</dbReference>
<dbReference type="InterPro" id="IPR029409">
    <property type="entry name" value="TMEM237"/>
</dbReference>
<dbReference type="PANTHER" id="PTHR28388">
    <property type="entry name" value="TRANSMEMBRANE PROTEIN 237"/>
    <property type="match status" value="1"/>
</dbReference>
<dbReference type="PANTHER" id="PTHR28388:SF1">
    <property type="entry name" value="TRANSMEMBRANE PROTEIN 237"/>
    <property type="match status" value="1"/>
</dbReference>
<dbReference type="Pfam" id="PF15383">
    <property type="entry name" value="TMEM237"/>
    <property type="match status" value="1"/>
</dbReference>
<reference key="1">
    <citation type="journal article" date="2001" name="Nat. Genet.">
        <title>A gene encoding a putative GTPase regulator is mutated in familial amyotrophic lateral sclerosis 2.</title>
        <authorList>
            <person name="Hadano S."/>
            <person name="Hand C.K."/>
            <person name="Osuga H."/>
            <person name="Yanagisawa Y."/>
            <person name="Otomo A."/>
            <person name="Devon R.S."/>
            <person name="Miyamoto N."/>
            <person name="Showguchi-Miyata J."/>
            <person name="Okada Y."/>
            <person name="Singaraja R."/>
            <person name="Figlewicz D.A."/>
            <person name="Kwiatkowski T."/>
            <person name="Hosler B.A."/>
            <person name="Sagie T."/>
            <person name="Skaug J."/>
            <person name="Nasir J."/>
            <person name="Brown R.H. Jr."/>
            <person name="Scherer S.W."/>
            <person name="Rouleau G.A."/>
            <person name="Hayden M.R."/>
            <person name="Ikeda J.-E."/>
        </authorList>
    </citation>
    <scope>NUCLEOTIDE SEQUENCE [MRNA] (ISOFORM 3)</scope>
</reference>
<reference key="2">
    <citation type="journal article" date="2004" name="Nat. Genet.">
        <title>Complete sequencing and characterization of 21,243 full-length human cDNAs.</title>
        <authorList>
            <person name="Ota T."/>
            <person name="Suzuki Y."/>
            <person name="Nishikawa T."/>
            <person name="Otsuki T."/>
            <person name="Sugiyama T."/>
            <person name="Irie R."/>
            <person name="Wakamatsu A."/>
            <person name="Hayashi K."/>
            <person name="Sato H."/>
            <person name="Nagai K."/>
            <person name="Kimura K."/>
            <person name="Makita H."/>
            <person name="Sekine M."/>
            <person name="Obayashi M."/>
            <person name="Nishi T."/>
            <person name="Shibahara T."/>
            <person name="Tanaka T."/>
            <person name="Ishii S."/>
            <person name="Yamamoto J."/>
            <person name="Saito K."/>
            <person name="Kawai Y."/>
            <person name="Isono Y."/>
            <person name="Nakamura Y."/>
            <person name="Nagahari K."/>
            <person name="Murakami K."/>
            <person name="Yasuda T."/>
            <person name="Iwayanagi T."/>
            <person name="Wagatsuma M."/>
            <person name="Shiratori A."/>
            <person name="Sudo H."/>
            <person name="Hosoiri T."/>
            <person name="Kaku Y."/>
            <person name="Kodaira H."/>
            <person name="Kondo H."/>
            <person name="Sugawara M."/>
            <person name="Takahashi M."/>
            <person name="Kanda K."/>
            <person name="Yokoi T."/>
            <person name="Furuya T."/>
            <person name="Kikkawa E."/>
            <person name="Omura Y."/>
            <person name="Abe K."/>
            <person name="Kamihara K."/>
            <person name="Katsuta N."/>
            <person name="Sato K."/>
            <person name="Tanikawa M."/>
            <person name="Yamazaki M."/>
            <person name="Ninomiya K."/>
            <person name="Ishibashi T."/>
            <person name="Yamashita H."/>
            <person name="Murakawa K."/>
            <person name="Fujimori K."/>
            <person name="Tanai H."/>
            <person name="Kimata M."/>
            <person name="Watanabe M."/>
            <person name="Hiraoka S."/>
            <person name="Chiba Y."/>
            <person name="Ishida S."/>
            <person name="Ono Y."/>
            <person name="Takiguchi S."/>
            <person name="Watanabe S."/>
            <person name="Yosida M."/>
            <person name="Hotuta T."/>
            <person name="Kusano J."/>
            <person name="Kanehori K."/>
            <person name="Takahashi-Fujii A."/>
            <person name="Hara H."/>
            <person name="Tanase T.-O."/>
            <person name="Nomura Y."/>
            <person name="Togiya S."/>
            <person name="Komai F."/>
            <person name="Hara R."/>
            <person name="Takeuchi K."/>
            <person name="Arita M."/>
            <person name="Imose N."/>
            <person name="Musashino K."/>
            <person name="Yuuki H."/>
            <person name="Oshima A."/>
            <person name="Sasaki N."/>
            <person name="Aotsuka S."/>
            <person name="Yoshikawa Y."/>
            <person name="Matsunawa H."/>
            <person name="Ichihara T."/>
            <person name="Shiohata N."/>
            <person name="Sano S."/>
            <person name="Moriya S."/>
            <person name="Momiyama H."/>
            <person name="Satoh N."/>
            <person name="Takami S."/>
            <person name="Terashima Y."/>
            <person name="Suzuki O."/>
            <person name="Nakagawa S."/>
            <person name="Senoh A."/>
            <person name="Mizoguchi H."/>
            <person name="Goto Y."/>
            <person name="Shimizu F."/>
            <person name="Wakebe H."/>
            <person name="Hishigaki H."/>
            <person name="Watanabe T."/>
            <person name="Sugiyama A."/>
            <person name="Takemoto M."/>
            <person name="Kawakami B."/>
            <person name="Yamazaki M."/>
            <person name="Watanabe K."/>
            <person name="Kumagai A."/>
            <person name="Itakura S."/>
            <person name="Fukuzumi Y."/>
            <person name="Fujimori Y."/>
            <person name="Komiyama M."/>
            <person name="Tashiro H."/>
            <person name="Tanigami A."/>
            <person name="Fujiwara T."/>
            <person name="Ono T."/>
            <person name="Yamada K."/>
            <person name="Fujii Y."/>
            <person name="Ozaki K."/>
            <person name="Hirao M."/>
            <person name="Ohmori Y."/>
            <person name="Kawabata A."/>
            <person name="Hikiji T."/>
            <person name="Kobatake N."/>
            <person name="Inagaki H."/>
            <person name="Ikema Y."/>
            <person name="Okamoto S."/>
            <person name="Okitani R."/>
            <person name="Kawakami T."/>
            <person name="Noguchi S."/>
            <person name="Itoh T."/>
            <person name="Shigeta K."/>
            <person name="Senba T."/>
            <person name="Matsumura K."/>
            <person name="Nakajima Y."/>
            <person name="Mizuno T."/>
            <person name="Morinaga M."/>
            <person name="Sasaki M."/>
            <person name="Togashi T."/>
            <person name="Oyama M."/>
            <person name="Hata H."/>
            <person name="Watanabe M."/>
            <person name="Komatsu T."/>
            <person name="Mizushima-Sugano J."/>
            <person name="Satoh T."/>
            <person name="Shirai Y."/>
            <person name="Takahashi Y."/>
            <person name="Nakagawa K."/>
            <person name="Okumura K."/>
            <person name="Nagase T."/>
            <person name="Nomura N."/>
            <person name="Kikuchi H."/>
            <person name="Masuho Y."/>
            <person name="Yamashita R."/>
            <person name="Nakai K."/>
            <person name="Yada T."/>
            <person name="Nakamura Y."/>
            <person name="Ohara O."/>
            <person name="Isogai T."/>
            <person name="Sugano S."/>
        </authorList>
    </citation>
    <scope>NUCLEOTIDE SEQUENCE [LARGE SCALE MRNA] (ISOFORMS 2; 4 AND 5)</scope>
    <source>
        <tissue>Trachea</tissue>
    </source>
</reference>
<reference key="3">
    <citation type="journal article" date="2005" name="Nature">
        <title>Generation and annotation of the DNA sequences of human chromosomes 2 and 4.</title>
        <authorList>
            <person name="Hillier L.W."/>
            <person name="Graves T.A."/>
            <person name="Fulton R.S."/>
            <person name="Fulton L.A."/>
            <person name="Pepin K.H."/>
            <person name="Minx P."/>
            <person name="Wagner-McPherson C."/>
            <person name="Layman D."/>
            <person name="Wylie K."/>
            <person name="Sekhon M."/>
            <person name="Becker M.C."/>
            <person name="Fewell G.A."/>
            <person name="Delehaunty K.D."/>
            <person name="Miner T.L."/>
            <person name="Nash W.E."/>
            <person name="Kremitzki C."/>
            <person name="Oddy L."/>
            <person name="Du H."/>
            <person name="Sun H."/>
            <person name="Bradshaw-Cordum H."/>
            <person name="Ali J."/>
            <person name="Carter J."/>
            <person name="Cordes M."/>
            <person name="Harris A."/>
            <person name="Isak A."/>
            <person name="van Brunt A."/>
            <person name="Nguyen C."/>
            <person name="Du F."/>
            <person name="Courtney L."/>
            <person name="Kalicki J."/>
            <person name="Ozersky P."/>
            <person name="Abbott S."/>
            <person name="Armstrong J."/>
            <person name="Belter E.A."/>
            <person name="Caruso L."/>
            <person name="Cedroni M."/>
            <person name="Cotton M."/>
            <person name="Davidson T."/>
            <person name="Desai A."/>
            <person name="Elliott G."/>
            <person name="Erb T."/>
            <person name="Fronick C."/>
            <person name="Gaige T."/>
            <person name="Haakenson W."/>
            <person name="Haglund K."/>
            <person name="Holmes A."/>
            <person name="Harkins R."/>
            <person name="Kim K."/>
            <person name="Kruchowski S.S."/>
            <person name="Strong C.M."/>
            <person name="Grewal N."/>
            <person name="Goyea E."/>
            <person name="Hou S."/>
            <person name="Levy A."/>
            <person name="Martinka S."/>
            <person name="Mead K."/>
            <person name="McLellan M.D."/>
            <person name="Meyer R."/>
            <person name="Randall-Maher J."/>
            <person name="Tomlinson C."/>
            <person name="Dauphin-Kohlberg S."/>
            <person name="Kozlowicz-Reilly A."/>
            <person name="Shah N."/>
            <person name="Swearengen-Shahid S."/>
            <person name="Snider J."/>
            <person name="Strong J.T."/>
            <person name="Thompson J."/>
            <person name="Yoakum M."/>
            <person name="Leonard S."/>
            <person name="Pearman C."/>
            <person name="Trani L."/>
            <person name="Radionenko M."/>
            <person name="Waligorski J.E."/>
            <person name="Wang C."/>
            <person name="Rock S.M."/>
            <person name="Tin-Wollam A.-M."/>
            <person name="Maupin R."/>
            <person name="Latreille P."/>
            <person name="Wendl M.C."/>
            <person name="Yang S.-P."/>
            <person name="Pohl C."/>
            <person name="Wallis J.W."/>
            <person name="Spieth J."/>
            <person name="Bieri T.A."/>
            <person name="Berkowicz N."/>
            <person name="Nelson J.O."/>
            <person name="Osborne J."/>
            <person name="Ding L."/>
            <person name="Meyer R."/>
            <person name="Sabo A."/>
            <person name="Shotland Y."/>
            <person name="Sinha P."/>
            <person name="Wohldmann P.E."/>
            <person name="Cook L.L."/>
            <person name="Hickenbotham M.T."/>
            <person name="Eldred J."/>
            <person name="Williams D."/>
            <person name="Jones T.A."/>
            <person name="She X."/>
            <person name="Ciccarelli F.D."/>
            <person name="Izaurralde E."/>
            <person name="Taylor J."/>
            <person name="Schmutz J."/>
            <person name="Myers R.M."/>
            <person name="Cox D.R."/>
            <person name="Huang X."/>
            <person name="McPherson J.D."/>
            <person name="Mardis E.R."/>
            <person name="Clifton S.W."/>
            <person name="Warren W.C."/>
            <person name="Chinwalla A.T."/>
            <person name="Eddy S.R."/>
            <person name="Marra M.A."/>
            <person name="Ovcharenko I."/>
            <person name="Furey T.S."/>
            <person name="Miller W."/>
            <person name="Eichler E.E."/>
            <person name="Bork P."/>
            <person name="Suyama M."/>
            <person name="Torrents D."/>
            <person name="Waterston R.H."/>
            <person name="Wilson R.K."/>
        </authorList>
    </citation>
    <scope>NUCLEOTIDE SEQUENCE [LARGE SCALE GENOMIC DNA]</scope>
</reference>
<reference key="4">
    <citation type="journal article" date="2004" name="Genome Res.">
        <title>The status, quality, and expansion of the NIH full-length cDNA project: the Mammalian Gene Collection (MGC).</title>
        <authorList>
            <consortium name="The MGC Project Team"/>
        </authorList>
    </citation>
    <scope>NUCLEOTIDE SEQUENCE [LARGE SCALE MRNA] (ISOFORM 2)</scope>
    <source>
        <tissue>Brain</tissue>
        <tissue>Ovary</tissue>
    </source>
</reference>
<reference key="5">
    <citation type="journal article" date="2007" name="BMC Genomics">
        <title>The full-ORF clone resource of the German cDNA consortium.</title>
        <authorList>
            <person name="Bechtel S."/>
            <person name="Rosenfelder H."/>
            <person name="Duda A."/>
            <person name="Schmidt C.P."/>
            <person name="Ernst U."/>
            <person name="Wellenreuther R."/>
            <person name="Mehrle A."/>
            <person name="Schuster C."/>
            <person name="Bahr A."/>
            <person name="Bloecker H."/>
            <person name="Heubner D."/>
            <person name="Hoerlein A."/>
            <person name="Michel G."/>
            <person name="Wedler H."/>
            <person name="Koehrer K."/>
            <person name="Ottenwaelder B."/>
            <person name="Poustka A."/>
            <person name="Wiemann S."/>
            <person name="Schupp I."/>
        </authorList>
    </citation>
    <scope>NUCLEOTIDE SEQUENCE [LARGE SCALE MRNA] OF 272-408</scope>
    <source>
        <tissue>Fetal skin</tissue>
    </source>
</reference>
<reference key="6">
    <citation type="journal article" date="2013" name="J. Proteome Res.">
        <title>Toward a comprehensive characterization of a human cancer cell phosphoproteome.</title>
        <authorList>
            <person name="Zhou H."/>
            <person name="Di Palma S."/>
            <person name="Preisinger C."/>
            <person name="Peng M."/>
            <person name="Polat A.N."/>
            <person name="Heck A.J."/>
            <person name="Mohammed S."/>
        </authorList>
    </citation>
    <scope>PHOSPHORYLATION [LARGE SCALE ANALYSIS] AT SER-25 AND SER-49</scope>
    <scope>IDENTIFICATION BY MASS SPECTROMETRY [LARGE SCALE ANALYSIS]</scope>
    <source>
        <tissue>Erythroleukemia</tissue>
    </source>
</reference>
<reference key="7">
    <citation type="journal article" date="2016" name="Nat. Cell Biol.">
        <title>TMEM107 recruits ciliopathy proteins to subdomains of the ciliary transition zone and causes Joubert syndrome.</title>
        <authorList>
            <person name="Lambacher N.J."/>
            <person name="Bruel A.L."/>
            <person name="van Dam T.J."/>
            <person name="Szymanska K."/>
            <person name="Slaats G.G."/>
            <person name="Kuhns S."/>
            <person name="McManus G.J."/>
            <person name="Kennedy J.E."/>
            <person name="Gaff K."/>
            <person name="Wu K.M."/>
            <person name="van der Lee R."/>
            <person name="Burglen L."/>
            <person name="Doummar D."/>
            <person name="Riviere J.B."/>
            <person name="Faivre L."/>
            <person name="Attie-Bitach T."/>
            <person name="Saunier S."/>
            <person name="Curd A."/>
            <person name="Peckham M."/>
            <person name="Giles R.H."/>
            <person name="Johnson C.A."/>
            <person name="Huynen M.A."/>
            <person name="Thauvin-Robinet C."/>
            <person name="Blacque O.E."/>
        </authorList>
    </citation>
    <scope>IDENTIFICATION IN THE TECTONIC-LIKE COMPLEX</scope>
    <scope>INTERACTION WITH TMEM107</scope>
</reference>
<reference key="8">
    <citation type="journal article" date="2011" name="Am. J. Hum. Genet.">
        <title>TMEM237 is mutated in individuals with a Joubert syndrome related disorder and expands the role of the TMEM family at the ciliary transition zone.</title>
        <authorList>
            <person name="Huang L."/>
            <person name="Szymanska K."/>
            <person name="Jensen V.L."/>
            <person name="Janecke A.R."/>
            <person name="Innes A.M."/>
            <person name="Davis E.E."/>
            <person name="Frosk P."/>
            <person name="Li C."/>
            <person name="Willer J.R."/>
            <person name="Chodirker B.N."/>
            <person name="Greenberg C.R."/>
            <person name="McLeod D.R."/>
            <person name="Bernier F.P."/>
            <person name="Chudley A.E."/>
            <person name="Muller T."/>
            <person name="Shboul M."/>
            <person name="Logan C.V."/>
            <person name="Loucks C.M."/>
            <person name="Beaulieu C.L."/>
            <person name="Bowie R.V."/>
            <person name="Bell S.M."/>
            <person name="Adkins J."/>
            <person name="Zuniga F.I."/>
            <person name="Ross K.D."/>
            <person name="Wang J."/>
            <person name="Ban M.R."/>
            <person name="Becker C."/>
            <person name="Nurnberg P."/>
            <person name="Douglas S."/>
            <person name="Craft C.M."/>
            <person name="Akimenko M.A."/>
            <person name="Hegele R.A."/>
            <person name="Ober C."/>
            <person name="Utermann G."/>
            <person name="Bolz H.J."/>
            <person name="Bulman D.E."/>
            <person name="Katsanis N."/>
            <person name="Blacque O.E."/>
            <person name="Doherty D."/>
            <person name="Parboosingh J.S."/>
            <person name="Leroux M.R."/>
            <person name="Johnson C.A."/>
            <person name="Boycott K.M."/>
        </authorList>
    </citation>
    <scope>INVOLVEMENT IN JBTS14</scope>
    <scope>SUBCELLULAR LOCATION</scope>
    <scope>FUNCTION</scope>
    <scope>VARIANT ALA-155</scope>
    <scope>CHARACTERIZATION OF VARIANT ALA-155</scope>
</reference>
<proteinExistence type="evidence at protein level"/>
<feature type="chain" id="PRO_0000076169" description="Transmembrane protein 237">
    <location>
        <begin position="1"/>
        <end position="408"/>
    </location>
</feature>
<feature type="transmembrane region" description="Helical" evidence="1">
    <location>
        <begin position="227"/>
        <end position="247"/>
    </location>
</feature>
<feature type="transmembrane region" description="Helical" evidence="1">
    <location>
        <begin position="268"/>
        <end position="288"/>
    </location>
</feature>
<feature type="transmembrane region" description="Helical" evidence="1">
    <location>
        <begin position="303"/>
        <end position="323"/>
    </location>
</feature>
<feature type="transmembrane region" description="Helical" evidence="1">
    <location>
        <begin position="358"/>
        <end position="378"/>
    </location>
</feature>
<feature type="region of interest" description="Disordered" evidence="2">
    <location>
        <begin position="1"/>
        <end position="137"/>
    </location>
</feature>
<feature type="compositionally biased region" description="Basic and acidic residues" evidence="2">
    <location>
        <begin position="1"/>
        <end position="14"/>
    </location>
</feature>
<feature type="compositionally biased region" description="Basic and acidic residues" evidence="2">
    <location>
        <begin position="60"/>
        <end position="77"/>
    </location>
</feature>
<feature type="compositionally biased region" description="Low complexity" evidence="2">
    <location>
        <begin position="95"/>
        <end position="106"/>
    </location>
</feature>
<feature type="modified residue" description="Phosphoserine" evidence="9">
    <location>
        <position position="25"/>
    </location>
</feature>
<feature type="modified residue" description="Phosphoserine" evidence="9">
    <location>
        <position position="49"/>
    </location>
</feature>
<feature type="splice variant" id="VSP_016628" description="In isoform 2." evidence="6 7">
    <original>MRTDSGARLEEGHL</original>
    <variation>MGKNPV</variation>
    <location>
        <begin position="1"/>
        <end position="14"/>
    </location>
</feature>
<feature type="splice variant" id="VSP_042381" description="In isoform 3." evidence="5">
    <original>MRTDSGARLEEGHL</original>
    <variation>MTHCACARDRAREGWGARCLGARRPPRPAKRRMGKNPV</variation>
    <location>
        <begin position="1"/>
        <end position="14"/>
    </location>
</feature>
<feature type="splice variant" id="VSP_042382" description="In isoform 4." evidence="6">
    <location>
        <begin position="36"/>
        <end position="130"/>
    </location>
</feature>
<feature type="splice variant" id="VSP_042383" description="In isoform 5." evidence="6">
    <original>K</original>
    <variation>KRPYYR</variation>
    <location>
        <position position="132"/>
    </location>
</feature>
<feature type="sequence variant" id="VAR_067019" description="Found at heterozygosity in a patient with Bardet-Biedl syndrome also carrying BBS6 mutation A-57 in MKKS; hypomorphic variant." evidence="3">
    <original>D</original>
    <variation>A</variation>
    <location>
        <position position="155"/>
    </location>
</feature>
<feature type="sequence conflict" description="In Ref. 4; AAH29611." evidence="8" ref="4">
    <original>L</original>
    <variation>I</variation>
    <location>
        <position position="20"/>
    </location>
</feature>
<feature type="sequence conflict" description="In Ref. 4; AAH29611." evidence="8" ref="4">
    <original>P</original>
    <variation>Q</variation>
    <location>
        <position position="118"/>
    </location>
</feature>
<feature type="sequence conflict" description="In Ref. 2; BAG64880." evidence="8" ref="2">
    <original>T</original>
    <variation>A</variation>
    <location>
        <position position="158"/>
    </location>
</feature>
<feature type="sequence conflict" description="In Ref. 4; AAH29611." evidence="8" ref="4">
    <original>R</original>
    <variation>I</variation>
    <location>
        <position position="215"/>
    </location>
</feature>
<feature type="sequence conflict" description="In Ref. 4; AAH29611." evidence="8" ref="4">
    <original>L</original>
    <variation>I</variation>
    <location>
        <position position="261"/>
    </location>
</feature>
<sequence length="408" mass="45526">MRTDSGARLEEGHLRPPRALPPVPSQDDIPLSRPKKKKPRTKNTPASASLEGLAQTAGRRPSEGNEPSTKELKEHPEAPVQRRQKKTRLPLELETSSTQKKSSSSSLLRNENGIDAEPAEEAVIQKPRRKTKKTQPAELQYANELGVEDEDIITDEQTTVEQQSVFTAPTGISQPVGKVFVEKSRRFQAADRSELIKTTENIDVSMDVKPSWTTRDVALTVHRAFRMIGLFSHGFLAGCAVWNIVVIYVLAGDQLSNLSNLLQQYKTLAYPFQSLLYLLLALSTISAFDRIDFAKISVAIRNFLALDPTALASFLYFTALILSLSQQMTSDRIHLYTPSSVNGSLWEAGIEEQILQPWIVVNLVVALLVGLSWLFLSYRPGMDLSEELMFSSEVEEYPDKEKEIKASS</sequence>
<protein>
    <recommendedName>
        <fullName>Transmembrane protein 237</fullName>
    </recommendedName>
    <alternativeName>
        <fullName>Amyotrophic lateral sclerosis 2 chromosomal region candidate gene 4 protein</fullName>
    </alternativeName>
</protein>
<organism>
    <name type="scientific">Homo sapiens</name>
    <name type="common">Human</name>
    <dbReference type="NCBI Taxonomy" id="9606"/>
    <lineage>
        <taxon>Eukaryota</taxon>
        <taxon>Metazoa</taxon>
        <taxon>Chordata</taxon>
        <taxon>Craniata</taxon>
        <taxon>Vertebrata</taxon>
        <taxon>Euteleostomi</taxon>
        <taxon>Mammalia</taxon>
        <taxon>Eutheria</taxon>
        <taxon>Euarchontoglires</taxon>
        <taxon>Primates</taxon>
        <taxon>Haplorrhini</taxon>
        <taxon>Catarrhini</taxon>
        <taxon>Hominidae</taxon>
        <taxon>Homo</taxon>
    </lineage>
</organism>
<comment type="function">
    <text evidence="3">Component of the transition zone in primary cilia. Required for ciliogenesis.</text>
</comment>
<comment type="subunit">
    <text evidence="4">Part of the tectonic-like complex (also named B9 complex). Interacts with TMEM107.</text>
</comment>
<comment type="interaction">
    <interactant intactId="EBI-2602465">
        <id>Q96Q45</id>
    </interactant>
    <interactant intactId="EBI-349854">
        <id>P13569</id>
        <label>CFTR</label>
    </interactant>
    <organismsDiffer>false</organismsDiffer>
    <experiments>4</experiments>
</comment>
<comment type="interaction">
    <interactant intactId="EBI-10982110">
        <id>Q96Q45-2</id>
    </interactant>
    <interactant intactId="EBI-348517">
        <id>O95870</id>
        <label>ABHD16A</label>
    </interactant>
    <organismsDiffer>false</organismsDiffer>
    <experiments>5</experiments>
</comment>
<comment type="interaction">
    <interactant intactId="EBI-10982110">
        <id>Q96Q45-2</id>
    </interactant>
    <interactant intactId="EBI-10225815">
        <id>Q08AM2</id>
        <label>ADAM33</label>
    </interactant>
    <organismsDiffer>false</organismsDiffer>
    <experiments>3</experiments>
</comment>
<comment type="interaction">
    <interactant intactId="EBI-10982110">
        <id>Q96Q45-2</id>
    </interactant>
    <interactant intactId="EBI-10827839">
        <id>Q15848</id>
        <label>ADIPOQ</label>
    </interactant>
    <organismsDiffer>false</organismsDiffer>
    <experiments>3</experiments>
</comment>
<comment type="interaction">
    <interactant intactId="EBI-10982110">
        <id>Q96Q45-2</id>
    </interactant>
    <interactant intactId="EBI-715495">
        <id>P05090</id>
        <label>APOD</label>
    </interactant>
    <organismsDiffer>false</organismsDiffer>
    <experiments>5</experiments>
</comment>
<comment type="interaction">
    <interactant intactId="EBI-10982110">
        <id>Q96Q45-2</id>
    </interactant>
    <interactant intactId="EBI-11976321">
        <id>O95236-2</id>
        <label>APOL3</label>
    </interactant>
    <organismsDiffer>false</organismsDiffer>
    <experiments>3</experiments>
</comment>
<comment type="interaction">
    <interactant intactId="EBI-10982110">
        <id>Q96Q45-2</id>
    </interactant>
    <interactant intactId="EBI-745213">
        <id>P29972</id>
        <label>AQP1</label>
    </interactant>
    <organismsDiffer>false</organismsDiffer>
    <experiments>3</experiments>
</comment>
<comment type="interaction">
    <interactant intactId="EBI-10982110">
        <id>Q96Q45-2</id>
    </interactant>
    <interactant intactId="EBI-12069500">
        <id>Q9HD20-3</id>
        <label>ATP13A1</label>
    </interactant>
    <organismsDiffer>false</organismsDiffer>
    <experiments>3</experiments>
</comment>
<comment type="interaction">
    <interactant intactId="EBI-10982110">
        <id>Q96Q45-2</id>
    </interactant>
    <interactant intactId="EBI-749204">
        <id>O15155</id>
        <label>BET1</label>
    </interactant>
    <organismsDiffer>false</organismsDiffer>
    <experiments>3</experiments>
</comment>
<comment type="interaction">
    <interactant intactId="EBI-10982110">
        <id>Q96Q45-2</id>
    </interactant>
    <interactant intactId="EBI-3895726">
        <id>P62952</id>
        <label>BLCAP</label>
    </interactant>
    <organismsDiffer>false</organismsDiffer>
    <experiments>3</experiments>
</comment>
<comment type="interaction">
    <interactant intactId="EBI-10982110">
        <id>Q96Q45-2</id>
    </interactant>
    <interactant intactId="EBI-752094">
        <id>Q12982</id>
        <label>BNIP2</label>
    </interactant>
    <organismsDiffer>false</organismsDiffer>
    <experiments>3</experiments>
</comment>
<comment type="interaction">
    <interactant intactId="EBI-10982110">
        <id>Q96Q45-2</id>
    </interactant>
    <interactant intactId="EBI-8648738">
        <id>Q8WVV5</id>
        <label>BTN2A2</label>
    </interactant>
    <organismsDiffer>false</organismsDiffer>
    <experiments>5</experiments>
</comment>
<comment type="interaction">
    <interactant intactId="EBI-10982110">
        <id>Q96Q45-2</id>
    </interactant>
    <interactant intactId="EBI-12003442">
        <id>Q8WVX3-2</id>
        <label>C4orf3</label>
    </interactant>
    <organismsDiffer>false</organismsDiffer>
    <experiments>3</experiments>
</comment>
<comment type="interaction">
    <interactant intactId="EBI-10982110">
        <id>Q96Q45-2</id>
    </interactant>
    <interactant intactId="EBI-3953638">
        <id>P27352</id>
        <label>CBLIF</label>
    </interactant>
    <organismsDiffer>false</organismsDiffer>
    <experiments>3</experiments>
</comment>
<comment type="interaction">
    <interactant intactId="EBI-10982110">
        <id>Q96Q45-2</id>
    </interactant>
    <interactant intactId="EBI-9083477">
        <id>Q9P0B6</id>
        <label>CCDC167</label>
    </interactant>
    <organismsDiffer>false</organismsDiffer>
    <experiments>3</experiments>
</comment>
<comment type="interaction">
    <interactant intactId="EBI-10982110">
        <id>Q96Q45-2</id>
    </interactant>
    <interactant intactId="EBI-6657396">
        <id>P19397</id>
        <label>CD53</label>
    </interactant>
    <organismsDiffer>false</organismsDiffer>
    <experiments>3</experiments>
</comment>
<comment type="interaction">
    <interactant intactId="EBI-10982110">
        <id>Q96Q45-2</id>
    </interactant>
    <interactant intactId="EBI-13295305">
        <id>Q92903</id>
        <label>CDS1</label>
    </interactant>
    <organismsDiffer>false</organismsDiffer>
    <experiments>3</experiments>
</comment>
<comment type="interaction">
    <interactant intactId="EBI-10982110">
        <id>Q96Q45-2</id>
    </interactant>
    <interactant intactId="EBI-11579371">
        <id>Q9BXR6</id>
        <label>CFHR5</label>
    </interactant>
    <organismsDiffer>false</organismsDiffer>
    <experiments>3</experiments>
</comment>
<comment type="interaction">
    <interactant intactId="EBI-10982110">
        <id>Q96Q45-2</id>
    </interactant>
    <interactant intactId="EBI-9316372">
        <id>O14493</id>
        <label>CLDN4</label>
    </interactant>
    <organismsDiffer>false</organismsDiffer>
    <experiments>3</experiments>
</comment>
<comment type="interaction">
    <interactant intactId="EBI-10982110">
        <id>Q96Q45-2</id>
    </interactant>
    <interactant intactId="EBI-6165897">
        <id>Q9NWW5</id>
        <label>CLN6</label>
    </interactant>
    <organismsDiffer>false</organismsDiffer>
    <experiments>3</experiments>
</comment>
<comment type="interaction">
    <interactant intactId="EBI-10982110">
        <id>Q96Q45-2</id>
    </interactant>
    <interactant intactId="EBI-12208021">
        <id>Q8TBE1</id>
        <label>CNIH3</label>
    </interactant>
    <organismsDiffer>false</organismsDiffer>
    <experiments>3</experiments>
</comment>
<comment type="interaction">
    <interactant intactId="EBI-10982110">
        <id>Q96Q45-2</id>
    </interactant>
    <interactant intactId="EBI-3911467">
        <id>Q07325</id>
        <label>CXCL9</label>
    </interactant>
    <organismsDiffer>false</organismsDiffer>
    <experiments>5</experiments>
</comment>
<comment type="interaction">
    <interactant intactId="EBI-10982110">
        <id>Q96Q45-2</id>
    </interactant>
    <interactant intactId="EBI-1058710">
        <id>O43169</id>
        <label>CYB5B</label>
    </interactant>
    <organismsDiffer>false</organismsDiffer>
    <experiments>3</experiments>
</comment>
<comment type="interaction">
    <interactant intactId="EBI-10982110">
        <id>Q96Q45-2</id>
    </interactant>
    <interactant intactId="EBI-1753674">
        <id>P52803</id>
        <label>EFNA5</label>
    </interactant>
    <organismsDiffer>false</organismsDiffer>
    <experiments>3</experiments>
</comment>
<comment type="interaction">
    <interactant intactId="EBI-10982110">
        <id>Q96Q45-2</id>
    </interactant>
    <interactant intactId="EBI-2820492">
        <id>Q9BV81</id>
        <label>EMC6</label>
    </interactant>
    <organismsDiffer>false</organismsDiffer>
    <experiments>3</experiments>
</comment>
<comment type="interaction">
    <interactant intactId="EBI-10982110">
        <id>Q96Q45-2</id>
    </interactant>
    <interactant intactId="EBI-10976398">
        <id>Q7Z2K6</id>
        <label>ERMP1</label>
    </interactant>
    <organismsDiffer>false</organismsDiffer>
    <experiments>5</experiments>
</comment>
<comment type="interaction">
    <interactant intactId="EBI-10982110">
        <id>Q96Q45-2</id>
    </interactant>
    <interactant intactId="EBI-1760167">
        <id>Q92935</id>
        <label>EXTL1</label>
    </interactant>
    <organismsDiffer>false</organismsDiffer>
    <experiments>3</experiments>
</comment>
<comment type="interaction">
    <interactant intactId="EBI-10982110">
        <id>Q96Q45-2</id>
    </interactant>
    <interactant intactId="EBI-2477093">
        <id>Q9NWM8</id>
        <label>FKBP14</label>
    </interactant>
    <organismsDiffer>false</organismsDiffer>
    <experiments>3</experiments>
</comment>
<comment type="interaction">
    <interactant intactId="EBI-10982110">
        <id>Q96Q45-2</id>
    </interactant>
    <interactant intactId="EBI-713304">
        <id>Q9H0Q3</id>
        <label>FXYD6</label>
    </interactant>
    <organismsDiffer>false</organismsDiffer>
    <experiments>3</experiments>
</comment>
<comment type="interaction">
    <interactant intactId="EBI-10982110">
        <id>Q96Q45-2</id>
    </interactant>
    <interactant intactId="EBI-746917">
        <id>O75084</id>
        <label>FZD7</label>
    </interactant>
    <organismsDiffer>false</organismsDiffer>
    <experiments>3</experiments>
</comment>
<comment type="interaction">
    <interactant intactId="EBI-10982110">
        <id>Q96Q45-2</id>
    </interactant>
    <interactant intactId="EBI-3905204">
        <id>P29033</id>
        <label>GJB2</label>
    </interactant>
    <organismsDiffer>false</organismsDiffer>
    <experiments>3</experiments>
</comment>
<comment type="interaction">
    <interactant intactId="EBI-10982110">
        <id>Q96Q45-2</id>
    </interactant>
    <interactant intactId="EBI-13380976">
        <id>Q86XP6</id>
        <label>GKN2</label>
    </interactant>
    <organismsDiffer>false</organismsDiffer>
    <experiments>3</experiments>
</comment>
<comment type="interaction">
    <interactant intactId="EBI-10982110">
        <id>Q96Q45-2</id>
    </interactant>
    <interactant intactId="EBI-13345167">
        <id>Q8TDT2</id>
        <label>GPR152</label>
    </interactant>
    <organismsDiffer>false</organismsDiffer>
    <experiments>3</experiments>
</comment>
<comment type="interaction">
    <interactant intactId="EBI-10982110">
        <id>Q96Q45-2</id>
    </interactant>
    <interactant intactId="EBI-10178951">
        <id>O00155</id>
        <label>GPR25</label>
    </interactant>
    <organismsDiffer>false</organismsDiffer>
    <experiments>3</experiments>
</comment>
<comment type="interaction">
    <interactant intactId="EBI-10982110">
        <id>Q96Q45-2</id>
    </interactant>
    <interactant intactId="EBI-18076404">
        <id>O15529</id>
        <label>GPR42</label>
    </interactant>
    <organismsDiffer>false</organismsDiffer>
    <experiments>3</experiments>
</comment>
<comment type="interaction">
    <interactant intactId="EBI-10982110">
        <id>Q96Q45-2</id>
    </interactant>
    <interactant intactId="EBI-10232876">
        <id>Q14416</id>
        <label>GRM2</label>
    </interactant>
    <organismsDiffer>false</organismsDiffer>
    <experiments>3</experiments>
</comment>
<comment type="interaction">
    <interactant intactId="EBI-10982110">
        <id>Q96Q45-2</id>
    </interactant>
    <interactant intactId="EBI-12244272">
        <id>Q02747</id>
        <label>GUCA2A</label>
    </interactant>
    <organismsDiffer>false</organismsDiffer>
    <experiments>3</experiments>
</comment>
<comment type="interaction">
    <interactant intactId="EBI-10982110">
        <id>Q96Q45-2</id>
    </interactant>
    <interactant intactId="EBI-702665">
        <id>P02724</id>
        <label>GYPA</label>
    </interactant>
    <organismsDiffer>false</organismsDiffer>
    <experiments>3</experiments>
</comment>
<comment type="interaction">
    <interactant intactId="EBI-10982110">
        <id>Q96Q45-2</id>
    </interactant>
    <interactant intactId="EBI-725665">
        <id>Q9Y5U9</id>
        <label>IER3IP1</label>
    </interactant>
    <organismsDiffer>false</organismsDiffer>
    <experiments>5</experiments>
</comment>
<comment type="interaction">
    <interactant intactId="EBI-10982110">
        <id>Q96Q45-2</id>
    </interactant>
    <interactant intactId="EBI-1030755">
        <id>P15260</id>
        <label>IFNGR1</label>
    </interactant>
    <organismsDiffer>false</organismsDiffer>
    <experiments>3</experiments>
</comment>
<comment type="interaction">
    <interactant intactId="EBI-10982110">
        <id>Q96Q45-2</id>
    </interactant>
    <interactant intactId="EBI-720480">
        <id>P24593</id>
        <label>IGFBP5</label>
    </interactant>
    <organismsDiffer>false</organismsDiffer>
    <experiments>5</experiments>
</comment>
<comment type="interaction">
    <interactant intactId="EBI-10982110">
        <id>Q96Q45-2</id>
    </interactant>
    <interactant intactId="EBI-6252425">
        <id>O15503</id>
        <label>INSIG1</label>
    </interactant>
    <organismsDiffer>false</organismsDiffer>
    <experiments>3</experiments>
</comment>
<comment type="interaction">
    <interactant intactId="EBI-10982110">
        <id>Q96Q45-2</id>
    </interactant>
    <interactant intactId="EBI-8503746">
        <id>Q9Y5U4</id>
        <label>INSIG2</label>
    </interactant>
    <organismsDiffer>false</organismsDiffer>
    <experiments>4</experiments>
</comment>
<comment type="interaction">
    <interactant intactId="EBI-10982110">
        <id>Q96Q45-2</id>
    </interactant>
    <interactant intactId="EBI-10266796">
        <id>Q8N5M9</id>
        <label>JAGN1</label>
    </interactant>
    <organismsDiffer>false</organismsDiffer>
    <experiments>3</experiments>
</comment>
<comment type="interaction">
    <interactant intactId="EBI-10982110">
        <id>Q96Q45-2</id>
    </interactant>
    <interactant intactId="EBI-8070286">
        <id>O43561-2</id>
        <label>LAT</label>
    </interactant>
    <organismsDiffer>false</organismsDiffer>
    <experiments>3</experiments>
</comment>
<comment type="interaction">
    <interactant intactId="EBI-10982110">
        <id>Q96Q45-2</id>
    </interactant>
    <interactant intactId="EBI-750776">
        <id>O95214</id>
        <label>LEPROTL1</label>
    </interactant>
    <organismsDiffer>false</organismsDiffer>
    <experiments>3</experiments>
</comment>
<comment type="interaction">
    <interactant intactId="EBI-10982110">
        <id>Q96Q45-2</id>
    </interactant>
    <interactant intactId="EBI-12033434">
        <id>Q9UBY5</id>
        <label>LPAR3</label>
    </interactant>
    <organismsDiffer>false</organismsDiffer>
    <experiments>3</experiments>
</comment>
<comment type="interaction">
    <interactant intactId="EBI-10982110">
        <id>Q96Q45-2</id>
    </interactant>
    <interactant intactId="EBI-2830349">
        <id>Q7Z4F1</id>
        <label>LRP10</label>
    </interactant>
    <organismsDiffer>false</organismsDiffer>
    <experiments>3</experiments>
</comment>
<comment type="interaction">
    <interactant intactId="EBI-10982110">
        <id>Q96Q45-2</id>
    </interactant>
    <interactant intactId="EBI-524105">
        <id>P01374</id>
        <label>LTA</label>
    </interactant>
    <organismsDiffer>false</organismsDiffer>
    <experiments>3</experiments>
</comment>
<comment type="interaction">
    <interactant intactId="EBI-10982110">
        <id>Q96Q45-2</id>
    </interactant>
    <interactant intactId="EBI-11956541">
        <id>Q9GZY8-5</id>
        <label>MFF</label>
    </interactant>
    <organismsDiffer>false</organismsDiffer>
    <experiments>3</experiments>
</comment>
<comment type="interaction">
    <interactant intactId="EBI-10982110">
        <id>Q96Q45-2</id>
    </interactant>
    <interactant intactId="EBI-3920969">
        <id>Q6N075</id>
        <label>MFSD5</label>
    </interactant>
    <organismsDiffer>false</organismsDiffer>
    <experiments>3</experiments>
</comment>
<comment type="interaction">
    <interactant intactId="EBI-10982110">
        <id>Q96Q45-2</id>
    </interactant>
    <interactant intactId="EBI-2858252">
        <id>Q6ZSS7</id>
        <label>MFSD6</label>
    </interactant>
    <organismsDiffer>false</organismsDiffer>
    <experiments>3</experiments>
</comment>
<comment type="interaction">
    <interactant intactId="EBI-10982110">
        <id>Q96Q45-2</id>
    </interactant>
    <interactant intactId="EBI-12070086">
        <id>Q5J8X5</id>
        <label>MS4A13</label>
    </interactant>
    <organismsDiffer>false</organismsDiffer>
    <experiments>3</experiments>
</comment>
<comment type="interaction">
    <interactant intactId="EBI-10982110">
        <id>Q96Q45-2</id>
    </interactant>
    <interactant intactId="EBI-2624456">
        <id>P41143</id>
        <label>OPRD1</label>
    </interactant>
    <organismsDiffer>false</organismsDiffer>
    <experiments>3</experiments>
</comment>
<comment type="interaction">
    <interactant intactId="EBI-10982110">
        <id>Q96Q45-2</id>
    </interactant>
    <interactant intactId="EBI-721750">
        <id>Q8N138</id>
        <label>ORMDL3</label>
    </interactant>
    <organismsDiffer>false</organismsDiffer>
    <experiments>3</experiments>
</comment>
<comment type="interaction">
    <interactant intactId="EBI-10982110">
        <id>Q96Q45-2</id>
    </interactant>
    <interactant intactId="EBI-7642372">
        <id>Q7RTS6</id>
        <label>OTOP2</label>
    </interactant>
    <organismsDiffer>false</organismsDiffer>
    <experiments>3</experiments>
</comment>
<comment type="interaction">
    <interactant intactId="EBI-10982110">
        <id>Q96Q45-2</id>
    </interactant>
    <interactant intactId="EBI-12853910">
        <id>Q7RTS5</id>
        <label>OTOP3</label>
    </interactant>
    <organismsDiffer>false</organismsDiffer>
    <experiments>3</experiments>
</comment>
<comment type="interaction">
    <interactant intactId="EBI-10982110">
        <id>Q96Q45-2</id>
    </interactant>
    <interactant intactId="EBI-12955265">
        <id>Q96GM1</id>
        <label>PLPPR2</label>
    </interactant>
    <organismsDiffer>false</organismsDiffer>
    <experiments>3</experiments>
</comment>
<comment type="interaction">
    <interactant intactId="EBI-10982110">
        <id>Q96Q45-2</id>
    </interactant>
    <interactant intactId="EBI-8652812">
        <id>P54315</id>
        <label>PNLIPRP1</label>
    </interactant>
    <organismsDiffer>false</organismsDiffer>
    <experiments>5</experiments>
</comment>
<comment type="interaction">
    <interactant intactId="EBI-10982110">
        <id>Q96Q45-2</id>
    </interactant>
    <interactant intactId="EBI-3912424">
        <id>Q8WZA1</id>
        <label>POMGNT1</label>
    </interactant>
    <organismsDiffer>false</organismsDiffer>
    <experiments>3</experiments>
</comment>
<comment type="interaction">
    <interactant intactId="EBI-10982110">
        <id>Q96Q45-2</id>
    </interactant>
    <interactant intactId="EBI-14210385">
        <id>Q59EV6</id>
        <label>PPGB</label>
    </interactant>
    <organismsDiffer>false</organismsDiffer>
    <experiments>5</experiments>
</comment>
<comment type="interaction">
    <interactant intactId="EBI-10982110">
        <id>Q96Q45-2</id>
    </interactant>
    <interactant intactId="EBI-10173935">
        <id>A5D903</id>
        <label>PRB1</label>
    </interactant>
    <organismsDiffer>false</organismsDiffer>
    <experiments>3</experiments>
</comment>
<comment type="interaction">
    <interactant intactId="EBI-10982110">
        <id>Q96Q45-2</id>
    </interactant>
    <interactant intactId="EBI-10192441">
        <id>Q86VR2</id>
        <label>RETREG3</label>
    </interactant>
    <organismsDiffer>false</organismsDiffer>
    <experiments>3</experiments>
</comment>
<comment type="interaction">
    <interactant intactId="EBI-10982110">
        <id>Q96Q45-2</id>
    </interactant>
    <interactant intactId="EBI-17249212">
        <id>Q02161-2</id>
        <label>RHD</label>
    </interactant>
    <organismsDiffer>false</organismsDiffer>
    <experiments>3</experiments>
</comment>
<comment type="interaction">
    <interactant intactId="EBI-10982110">
        <id>Q96Q45-2</id>
    </interactant>
    <interactant intactId="EBI-399800">
        <id>Q9HCK4</id>
        <label>ROBO2</label>
    </interactant>
    <organismsDiffer>false</organismsDiffer>
    <experiments>5</experiments>
</comment>
<comment type="interaction">
    <interactant intactId="EBI-10982110">
        <id>Q96Q45-2</id>
    </interactant>
    <interactant intactId="EBI-1052363">
        <id>Q9NS64</id>
        <label>RPRM</label>
    </interactant>
    <organismsDiffer>false</organismsDiffer>
    <experiments>3</experiments>
</comment>
<comment type="interaction">
    <interactant intactId="EBI-10982110">
        <id>Q96Q45-2</id>
    </interactant>
    <interactant intactId="EBI-8636004">
        <id>Q96GQ5</id>
        <label>RUSF1</label>
    </interactant>
    <organismsDiffer>false</organismsDiffer>
    <experiments>3</experiments>
</comment>
<comment type="interaction">
    <interactant intactId="EBI-10982110">
        <id>Q96Q45-2</id>
    </interactant>
    <interactant intactId="EBI-8652744">
        <id>Q96IW7</id>
        <label>SEC22A</label>
    </interactant>
    <organismsDiffer>false</organismsDiffer>
    <experiments>3</experiments>
</comment>
<comment type="interaction">
    <interactant intactId="EBI-10982110">
        <id>Q96Q45-2</id>
    </interactant>
    <interactant intactId="EBI-749270">
        <id>Q8N6R1</id>
        <label>SERP2</label>
    </interactant>
    <organismsDiffer>false</organismsDiffer>
    <experiments>3</experiments>
</comment>
<comment type="interaction">
    <interactant intactId="EBI-10982110">
        <id>Q96Q45-2</id>
    </interactant>
    <interactant intactId="EBI-953978">
        <id>P05121</id>
        <label>SERPINE1</label>
    </interactant>
    <organismsDiffer>false</organismsDiffer>
    <experiments>3</experiments>
</comment>
<comment type="interaction">
    <interactant intactId="EBI-10982110">
        <id>Q96Q45-2</id>
    </interactant>
    <interactant intactId="EBI-17274136">
        <id>Q8TD22</id>
        <label>SFXN5</label>
    </interactant>
    <organismsDiffer>false</organismsDiffer>
    <experiments>3</experiments>
</comment>
<comment type="interaction">
    <interactant intactId="EBI-10982110">
        <id>Q96Q45-2</id>
    </interactant>
    <interactant intactId="EBI-12854384">
        <id>Q9Y666-2</id>
        <label>SLC12A7</label>
    </interactant>
    <organismsDiffer>false</organismsDiffer>
    <experiments>3</experiments>
</comment>
<comment type="interaction">
    <interactant intactId="EBI-10982110">
        <id>Q96Q45-2</id>
    </interactant>
    <interactant intactId="EBI-12889748">
        <id>O15374-3</id>
        <label>SLC16A4</label>
    </interactant>
    <organismsDiffer>false</organismsDiffer>
    <experiments>3</experiments>
</comment>
<comment type="interaction">
    <interactant intactId="EBI-10982110">
        <id>Q96Q45-2</id>
    </interactant>
    <interactant intactId="EBI-2825135">
        <id>P22732</id>
        <label>SLC2A5</label>
    </interactant>
    <organismsDiffer>false</organismsDiffer>
    <experiments>3</experiments>
</comment>
<comment type="interaction">
    <interactant intactId="EBI-10982110">
        <id>Q96Q45-2</id>
    </interactant>
    <interactant intactId="EBI-10262251">
        <id>Q8IWU4</id>
        <label>SLC30A8</label>
    </interactant>
    <organismsDiffer>false</organismsDiffer>
    <experiments>3</experiments>
</comment>
<comment type="interaction">
    <interactant intactId="EBI-10982110">
        <id>Q96Q45-2</id>
    </interactant>
    <interactant intactId="EBI-12363689">
        <id>Q96G79</id>
        <label>SLC35A4</label>
    </interactant>
    <organismsDiffer>false</organismsDiffer>
    <experiments>5</experiments>
</comment>
<comment type="interaction">
    <interactant intactId="EBI-10982110">
        <id>Q96Q45-2</id>
    </interactant>
    <interactant intactId="EBI-1054782">
        <id>Q8TB61</id>
        <label>SLC35B2</label>
    </interactant>
    <organismsDiffer>false</organismsDiffer>
    <experiments>3</experiments>
</comment>
<comment type="interaction">
    <interactant intactId="EBI-10982110">
        <id>Q96Q45-2</id>
    </interactant>
    <interactant intactId="EBI-10281213">
        <id>Q969S0</id>
        <label>SLC35B4</label>
    </interactant>
    <organismsDiffer>false</organismsDiffer>
    <experiments>3</experiments>
</comment>
<comment type="interaction">
    <interactant intactId="EBI-10982110">
        <id>Q96Q45-2</id>
    </interactant>
    <interactant intactId="EBI-12867720">
        <id>Q6ICL7</id>
        <label>SLC35E4</label>
    </interactant>
    <organismsDiffer>false</organismsDiffer>
    <experiments>3</experiments>
</comment>
<comment type="interaction">
    <interactant intactId="EBI-10982110">
        <id>Q96Q45-2</id>
    </interactant>
    <interactant intactId="EBI-13311257">
        <id>Q2M3R5</id>
        <label>SLC35G1</label>
    </interactant>
    <organismsDiffer>false</organismsDiffer>
    <experiments>3</experiments>
</comment>
<comment type="interaction">
    <interactant intactId="EBI-10982110">
        <id>Q96Q45-2</id>
    </interactant>
    <interactant intactId="EBI-723083">
        <id>Q96QD8</id>
        <label>SLC38A2</label>
    </interactant>
    <organismsDiffer>false</organismsDiffer>
    <experiments>3</experiments>
</comment>
<comment type="interaction">
    <interactant intactId="EBI-10982110">
        <id>Q96Q45-2</id>
    </interactant>
    <interactant intactId="EBI-10314552">
        <id>Q9NVC3</id>
        <label>SLC38A7</label>
    </interactant>
    <organismsDiffer>false</organismsDiffer>
    <experiments>5</experiments>
</comment>
<comment type="interaction">
    <interactant intactId="EBI-10982110">
        <id>Q96Q45-2</id>
    </interactant>
    <interactant intactId="EBI-12898013">
        <id>Q9NP94</id>
        <label>SLC39A2</label>
    </interactant>
    <organismsDiffer>false</organismsDiffer>
    <experiments>3</experiments>
</comment>
<comment type="interaction">
    <interactant intactId="EBI-10982110">
        <id>Q96Q45-2</id>
    </interactant>
    <interactant intactId="EBI-2823239">
        <id>Q9NUM3</id>
        <label>SLC39A9</label>
    </interactant>
    <organismsDiffer>false</organismsDiffer>
    <experiments>3</experiments>
</comment>
<comment type="interaction">
    <interactant intactId="EBI-10982110">
        <id>Q96Q45-2</id>
    </interactant>
    <interactant intactId="EBI-12266234">
        <id>Q8IVJ1</id>
        <label>SLC41A1</label>
    </interactant>
    <organismsDiffer>false</organismsDiffer>
    <experiments>5</experiments>
</comment>
<comment type="interaction">
    <interactant intactId="EBI-10982110">
        <id>Q96Q45-2</id>
    </interactant>
    <interactant intactId="EBI-10290130">
        <id>Q96JW4</id>
        <label>SLC41A2</label>
    </interactant>
    <organismsDiffer>false</organismsDiffer>
    <experiments>3</experiments>
</comment>
<comment type="interaction">
    <interactant intactId="EBI-10982110">
        <id>Q96Q45-2</id>
    </interactant>
    <interactant intactId="EBI-12904614">
        <id>Q9NWF4</id>
        <label>SLC52A1</label>
    </interactant>
    <organismsDiffer>false</organismsDiffer>
    <experiments>3</experiments>
</comment>
<comment type="interaction">
    <interactant intactId="EBI-10982110">
        <id>Q96Q45-2</id>
    </interactant>
    <interactant intactId="EBI-12409133">
        <id>Q9NY91</id>
        <label>SLC5A4</label>
    </interactant>
    <organismsDiffer>false</organismsDiffer>
    <experiments>3</experiments>
</comment>
<comment type="interaction">
    <interactant intactId="EBI-10982110">
        <id>Q96Q45-2</id>
    </interactant>
    <interactant intactId="EBI-4289564">
        <id>P30825</id>
        <label>SLC7A1</label>
    </interactant>
    <organismsDiffer>false</organismsDiffer>
    <experiments>3</experiments>
</comment>
<comment type="interaction">
    <interactant intactId="EBI-10982110">
        <id>Q96Q45-2</id>
    </interactant>
    <interactant intactId="EBI-13066314">
        <id>Q8WY07</id>
        <label>SLC7A3</label>
    </interactant>
    <organismsDiffer>false</organismsDiffer>
    <experiments>3</experiments>
</comment>
<comment type="interaction">
    <interactant intactId="EBI-10982110">
        <id>Q96Q45-2</id>
    </interactant>
    <interactant intactId="EBI-12908338">
        <id>Q96JF0-2</id>
        <label>ST6GAL2</label>
    </interactant>
    <organismsDiffer>false</organismsDiffer>
    <experiments>3</experiments>
</comment>
<comment type="interaction">
    <interactant intactId="EBI-10982110">
        <id>Q96Q45-2</id>
    </interactant>
    <interactant intactId="EBI-12200293">
        <id>P0DN84</id>
        <label>STRIT1</label>
    </interactant>
    <organismsDiffer>false</organismsDiffer>
    <experiments>3</experiments>
</comment>
<comment type="interaction">
    <interactant intactId="EBI-10982110">
        <id>Q96Q45-2</id>
    </interactant>
    <interactant intactId="EBI-727240">
        <id>Q9UNK0</id>
        <label>STX8</label>
    </interactant>
    <organismsDiffer>false</organismsDiffer>
    <experiments>3</experiments>
</comment>
<comment type="interaction">
    <interactant intactId="EBI-10982110">
        <id>Q96Q45-2</id>
    </interactant>
    <interactant intactId="EBI-12947623">
        <id>Q96MV1</id>
        <label>TLCD4</label>
    </interactant>
    <organismsDiffer>false</organismsDiffer>
    <experiments>3</experiments>
</comment>
<comment type="interaction">
    <interactant intactId="EBI-10982110">
        <id>Q96Q45-2</id>
    </interactant>
    <interactant intactId="EBI-6448756">
        <id>Q96DZ7</id>
        <label>TM4SF19</label>
    </interactant>
    <organismsDiffer>false</organismsDiffer>
    <experiments>3</experiments>
</comment>
<comment type="interaction">
    <interactant intactId="EBI-10982110">
        <id>Q96Q45-2</id>
    </interactant>
    <interactant intactId="EBI-13082040">
        <id>Q9BZW4</id>
        <label>TM6SF2</label>
    </interactant>
    <organismsDiffer>false</organismsDiffer>
    <experiments>3</experiments>
</comment>
<comment type="interaction">
    <interactant intactId="EBI-10982110">
        <id>Q96Q45-2</id>
    </interactant>
    <interactant intactId="EBI-11423693">
        <id>Q9UIK5</id>
        <label>TMEFF2</label>
    </interactant>
    <organismsDiffer>false</organismsDiffer>
    <experiments>3</experiments>
</comment>
<comment type="interaction">
    <interactant intactId="EBI-10982110">
        <id>Q96Q45-2</id>
    </interactant>
    <interactant intactId="EBI-12845616">
        <id>Q6UX40</id>
        <label>TMEM107</label>
    </interactant>
    <organismsDiffer>false</organismsDiffer>
    <experiments>3</experiments>
</comment>
<comment type="interaction">
    <interactant intactId="EBI-10982110">
        <id>Q96Q45-2</id>
    </interactant>
    <interactant intactId="EBI-723946">
        <id>P17152</id>
        <label>TMEM11</label>
    </interactant>
    <organismsDiffer>false</organismsDiffer>
    <experiments>3</experiments>
</comment>
<comment type="interaction">
    <interactant intactId="EBI-10982110">
        <id>Q96Q45-2</id>
    </interactant>
    <interactant intactId="EBI-10694905">
        <id>Q5BJH2-2</id>
        <label>TMEM128</label>
    </interactant>
    <organismsDiffer>false</organismsDiffer>
    <experiments>3</experiments>
</comment>
<comment type="interaction">
    <interactant intactId="EBI-10982110">
        <id>Q96Q45-2</id>
    </interactant>
    <interactant intactId="EBI-12876358">
        <id>Q7Z5S9</id>
        <label>TMEM144</label>
    </interactant>
    <organismsDiffer>false</organismsDiffer>
    <experiments>3</experiments>
</comment>
<comment type="interaction">
    <interactant intactId="EBI-10982110">
        <id>Q96Q45-2</id>
    </interactant>
    <interactant intactId="EBI-348587">
        <id>Q9BVK8</id>
        <label>TMEM147</label>
    </interactant>
    <organismsDiffer>false</organismsDiffer>
    <experiments>3</experiments>
</comment>
<comment type="interaction">
    <interactant intactId="EBI-10982110">
        <id>Q96Q45-2</id>
    </interactant>
    <interactant intactId="EBI-11724423">
        <id>Q7Z7N9</id>
        <label>TMEM179B</label>
    </interactant>
    <organismsDiffer>false</organismsDiffer>
    <experiments>3</experiments>
</comment>
<comment type="interaction">
    <interactant intactId="EBI-10982110">
        <id>Q96Q45-2</id>
    </interactant>
    <interactant intactId="EBI-11994282">
        <id>Q5SNT2-2</id>
        <label>TMEM201</label>
    </interactant>
    <organismsDiffer>false</organismsDiffer>
    <experiments>3</experiments>
</comment>
<comment type="interaction">
    <interactant intactId="EBI-10982110">
        <id>Q96Q45-2</id>
    </interactant>
    <interactant intactId="EBI-11956809">
        <id>Q8TBM7</id>
        <label>TMEM254</label>
    </interactant>
    <organismsDiffer>false</organismsDiffer>
    <experiments>3</experiments>
</comment>
<comment type="interaction">
    <interactant intactId="EBI-10982110">
        <id>Q96Q45-2</id>
    </interactant>
    <interactant intactId="EBI-12038591">
        <id>Q69YG0</id>
        <label>TMEM42</label>
    </interactant>
    <organismsDiffer>false</organismsDiffer>
    <experiments>3</experiments>
</comment>
<comment type="interaction">
    <interactant intactId="EBI-10982110">
        <id>Q96Q45-2</id>
    </interactant>
    <interactant intactId="EBI-2852148">
        <id>Q9H2L4</id>
        <label>TMEM60</label>
    </interactant>
    <organismsDiffer>false</organismsDiffer>
    <experiments>3</experiments>
</comment>
<comment type="interaction">
    <interactant intactId="EBI-10982110">
        <id>Q96Q45-2</id>
    </interactant>
    <interactant intactId="EBI-12878352">
        <id>A0PK05</id>
        <label>TMEM72</label>
    </interactant>
    <organismsDiffer>false</organismsDiffer>
    <experiments>3</experiments>
</comment>
<comment type="interaction">
    <interactant intactId="EBI-10982110">
        <id>Q96Q45-2</id>
    </interactant>
    <interactant intactId="EBI-2548832">
        <id>Q8N661</id>
        <label>TMEM86B</label>
    </interactant>
    <organismsDiffer>false</organismsDiffer>
    <experiments>5</experiments>
</comment>
<comment type="interaction">
    <interactant intactId="EBI-10982110">
        <id>Q96Q45-2</id>
    </interactant>
    <interactant intactId="EBI-10243654">
        <id>Q5BVD1</id>
        <label>TTMP</label>
    </interactant>
    <organismsDiffer>false</organismsDiffer>
    <experiments>3</experiments>
</comment>
<comment type="interaction">
    <interactant intactId="EBI-10982110">
        <id>Q96Q45-2</id>
    </interactant>
    <interactant intactId="EBI-11988865">
        <id>A5PKU2</id>
        <label>TUSC5</label>
    </interactant>
    <organismsDiffer>false</organismsDiffer>
    <experiments>3</experiments>
</comment>
<comment type="interaction">
    <interactant intactId="EBI-10982110">
        <id>Q96Q45-2</id>
    </interactant>
    <interactant intactId="EBI-13356252">
        <id>Q86WB7-2</id>
        <label>UNC93A</label>
    </interactant>
    <organismsDiffer>false</organismsDiffer>
    <experiments>6</experiments>
</comment>
<comment type="interaction">
    <interactant intactId="EBI-10982110">
        <id>Q96Q45-2</id>
    </interactant>
    <interactant intactId="EBI-4401271">
        <id>Q9H1C4</id>
        <label>UNC93B1</label>
    </interactant>
    <organismsDiffer>false</organismsDiffer>
    <experiments>3</experiments>
</comment>
<comment type="interaction">
    <interactant intactId="EBI-10982110">
        <id>Q96Q45-2</id>
    </interactant>
    <interactant intactId="EBI-12237619">
        <id>O75841</id>
        <label>UPK1B</label>
    </interactant>
    <organismsDiffer>false</organismsDiffer>
    <experiments>3</experiments>
</comment>
<comment type="interaction">
    <interactant intactId="EBI-10982110">
        <id>Q96Q45-2</id>
    </interactant>
    <interactant intactId="EBI-722343">
        <id>Q15836</id>
        <label>VAMP3</label>
    </interactant>
    <organismsDiffer>false</organismsDiffer>
    <experiments>3</experiments>
</comment>
<comment type="interaction">
    <interactant intactId="EBI-10982110">
        <id>Q96Q45-2</id>
    </interactant>
    <interactant intactId="EBI-6622053">
        <id>P15692-12</id>
        <label>VEGFA</label>
    </interactant>
    <organismsDiffer>false</organismsDiffer>
    <experiments>3</experiments>
</comment>
<comment type="interaction">
    <interactant intactId="EBI-10982110">
        <id>Q96Q45-2</id>
    </interactant>
    <interactant intactId="EBI-751210">
        <id>Q96EC8</id>
        <label>YIPF6</label>
    </interactant>
    <organismsDiffer>false</organismsDiffer>
    <experiments>3</experiments>
</comment>
<comment type="interaction">
    <interactant intactId="EBI-10982110">
        <id>Q96Q45-2</id>
    </interactant>
    <interactant intactId="EBI-718439">
        <id>O95159</id>
        <label>ZFPL1</label>
    </interactant>
    <organismsDiffer>false</organismsDiffer>
    <experiments>3</experiments>
</comment>
<comment type="interaction">
    <interactant intactId="EBI-10982110">
        <id>Q96Q45-2</id>
    </interactant>
    <interactant intactId="EBI-2857623">
        <id>Q96FB2</id>
    </interactant>
    <organismsDiffer>false</organismsDiffer>
    <experiments>3</experiments>
</comment>
<comment type="subcellular location">
    <subcellularLocation>
        <location evidence="8">Membrane</location>
        <topology evidence="8">Multi-pass membrane protein</topology>
    </subcellularLocation>
    <subcellularLocation>
        <location evidence="3">Cell projection</location>
        <location evidence="3">Cilium</location>
    </subcellularLocation>
    <text>Localizes at the proximal region of primary cilia were observed, consistent with localization to the transition zone. Anchored to the transition zone by RPGRIP1L.</text>
</comment>
<comment type="alternative products">
    <event type="alternative splicing"/>
    <isoform>
        <id>Q96Q45-1</id>
        <name>1</name>
        <sequence type="displayed"/>
    </isoform>
    <isoform>
        <id>Q96Q45-2</id>
        <name>2</name>
        <sequence type="described" ref="VSP_016628"/>
    </isoform>
    <isoform>
        <id>Q96Q45-3</id>
        <name>3</name>
        <sequence type="described" ref="VSP_042381"/>
    </isoform>
    <isoform>
        <id>Q96Q45-4</id>
        <name>4</name>
        <sequence type="described" ref="VSP_042382"/>
    </isoform>
    <isoform>
        <id>Q96Q45-5</id>
        <name>5</name>
        <sequence type="described" ref="VSP_042383"/>
    </isoform>
</comment>
<comment type="disease" evidence="3">
    <disease id="DI-03313">
        <name>Joubert syndrome 14</name>
        <acronym>JBTS14</acronym>
        <description>An autosomal recessive disorder characterized by severe intellectual disability, hypotonia, breathing abnormalities in infancy, and dysmorphic facial features. Neuroradiologically, it is characterized by cerebellar vermian hypoplasia/aplasia, thickened and reoriented superior cerebellar peduncles, and an abnormally large interpeduncular fossa, giving the appearance of a molar tooth on transaxial slices (molar tooth sign). Additional variable features include renal disease, abnormal eye movements, and postaxial polydactyly.</description>
        <dbReference type="MIM" id="614424"/>
    </disease>
    <text>The disease is caused by variants affecting the gene represented in this entry.</text>
</comment>
<comment type="similarity">
    <text evidence="8">Belongs to the TMEM237 family.</text>
</comment>
<comment type="sequence caution" evidence="8">
    <conflict type="erroneous gene model prediction">
        <sequence resource="EMBL-CDS" id="AAY14694"/>
    </conflict>
</comment>
<comment type="sequence caution" evidence="8">
    <conflict type="erroneous gene model prediction">
        <sequence resource="EMBL-CDS" id="AAY15056"/>
    </conflict>
</comment>
<evidence type="ECO:0000255" key="1"/>
<evidence type="ECO:0000256" key="2">
    <source>
        <dbReference type="SAM" id="MobiDB-lite"/>
    </source>
</evidence>
<evidence type="ECO:0000269" key="3">
    <source>
    </source>
</evidence>
<evidence type="ECO:0000269" key="4">
    <source>
    </source>
</evidence>
<evidence type="ECO:0000303" key="5">
    <source>
    </source>
</evidence>
<evidence type="ECO:0000303" key="6">
    <source>
    </source>
</evidence>
<evidence type="ECO:0000303" key="7">
    <source>
    </source>
</evidence>
<evidence type="ECO:0000305" key="8"/>
<evidence type="ECO:0007744" key="9">
    <source>
    </source>
</evidence>
<accession>Q96Q45</accession>
<accession>B4E1R8</accession>
<accession>B4E2R8</accession>
<accession>E9PAR8</accession>
<accession>E9PBF8</accession>
<accession>E9PG24</accession>
<accession>E9PGX0</accession>
<accession>Q53TS9</accession>
<accession>Q53TT2</accession>
<accession>Q7Z3B6</accession>
<accession>Q8IZ18</accession>
<accession>Q8NBF8</accession>
<accession>Q96CY1</accession>
<name>TM237_HUMAN</name>
<gene>
    <name type="primary">TMEM237</name>
    <name type="synonym">ALS2CR4</name>
</gene>
<keyword id="KW-0025">Alternative splicing</keyword>
<keyword id="KW-0966">Cell projection</keyword>
<keyword id="KW-1186">Ciliopathy</keyword>
<keyword id="KW-0969">Cilium</keyword>
<keyword id="KW-0970">Cilium biogenesis/degradation</keyword>
<keyword id="KW-0979">Joubert syndrome</keyword>
<keyword id="KW-0472">Membrane</keyword>
<keyword id="KW-0597">Phosphoprotein</keyword>
<keyword id="KW-1267">Proteomics identification</keyword>
<keyword id="KW-1185">Reference proteome</keyword>
<keyword id="KW-0812">Transmembrane</keyword>
<keyword id="KW-1133">Transmembrane helix</keyword>